<name>RIMO_CUPNH</name>
<proteinExistence type="inferred from homology"/>
<keyword id="KW-0004">4Fe-4S</keyword>
<keyword id="KW-0963">Cytoplasm</keyword>
<keyword id="KW-0408">Iron</keyword>
<keyword id="KW-0411">Iron-sulfur</keyword>
<keyword id="KW-0479">Metal-binding</keyword>
<keyword id="KW-1185">Reference proteome</keyword>
<keyword id="KW-0949">S-adenosyl-L-methionine</keyword>
<keyword id="KW-0808">Transferase</keyword>
<sequence>MGFVSLGCPKALVDSEQIITQLRAEGYAISGTYDGADLVVVNTCGFIDEAVQESLDAIGEALTENGKVIVTGCLGAKKDAAGHDIVSSVHPKVLAVTGPHALGEVMQAVHTHLPKPHDPFTDLVPAAGIKLTPKHYAYLKISEGCNHRCSFCIIPSMRGDLVSRPVAEVMLEAENLFKAGVKELLVISQDTSAYGVDVKYRTGFWNGRPLKTRMTELVAALGELAAQYGAWVRLHYVYPYPHVDEIIPLMSQGHVLPYLDVPLQHAHPDVLKRMKRPANAEKTMDRIRAWREICPELTIRSTFIAGFPGETEAEFQTLLDFIAEAELDRVGCFAYSPVEGATANDLPGALPDEVREERRARFMEVAEEVSARRLQRKVGQTLRVLVDEVNQDGGIGRSSADAPEIDGLVYIAPPERHAQRYRAGEFVDVKITGADGHDLWGAV</sequence>
<reference key="1">
    <citation type="journal article" date="2006" name="Nat. Biotechnol.">
        <title>Genome sequence of the bioplastic-producing 'Knallgas' bacterium Ralstonia eutropha H16.</title>
        <authorList>
            <person name="Pohlmann A."/>
            <person name="Fricke W.F."/>
            <person name="Reinecke F."/>
            <person name="Kusian B."/>
            <person name="Liesegang H."/>
            <person name="Cramm R."/>
            <person name="Eitinger T."/>
            <person name="Ewering C."/>
            <person name="Poetter M."/>
            <person name="Schwartz E."/>
            <person name="Strittmatter A."/>
            <person name="Voss I."/>
            <person name="Gottschalk G."/>
            <person name="Steinbuechel A."/>
            <person name="Friedrich B."/>
            <person name="Bowien B."/>
        </authorList>
    </citation>
    <scope>NUCLEOTIDE SEQUENCE [LARGE SCALE GENOMIC DNA]</scope>
    <source>
        <strain>ATCC 17699 / DSM 428 / KCTC 22496 / NCIMB 10442 / H16 / Stanier 337</strain>
    </source>
</reference>
<feature type="chain" id="PRO_0000374959" description="Ribosomal protein uS12 methylthiotransferase RimO">
    <location>
        <begin position="1"/>
        <end position="443"/>
    </location>
</feature>
<feature type="domain" description="MTTase N-terminal" evidence="1">
    <location>
        <begin position="1"/>
        <end position="114"/>
    </location>
</feature>
<feature type="domain" description="Radical SAM core" evidence="2">
    <location>
        <begin position="131"/>
        <end position="372"/>
    </location>
</feature>
<feature type="domain" description="TRAM" evidence="1">
    <location>
        <begin position="375"/>
        <end position="443"/>
    </location>
</feature>
<feature type="binding site" evidence="1">
    <location>
        <position position="8"/>
    </location>
    <ligand>
        <name>[4Fe-4S] cluster</name>
        <dbReference type="ChEBI" id="CHEBI:49883"/>
        <label>1</label>
    </ligand>
</feature>
<feature type="binding site" evidence="1">
    <location>
        <position position="44"/>
    </location>
    <ligand>
        <name>[4Fe-4S] cluster</name>
        <dbReference type="ChEBI" id="CHEBI:49883"/>
        <label>1</label>
    </ligand>
</feature>
<feature type="binding site" evidence="1">
    <location>
        <position position="73"/>
    </location>
    <ligand>
        <name>[4Fe-4S] cluster</name>
        <dbReference type="ChEBI" id="CHEBI:49883"/>
        <label>1</label>
    </ligand>
</feature>
<feature type="binding site" evidence="1">
    <location>
        <position position="145"/>
    </location>
    <ligand>
        <name>[4Fe-4S] cluster</name>
        <dbReference type="ChEBI" id="CHEBI:49883"/>
        <label>2</label>
        <note>4Fe-4S-S-AdoMet</note>
    </ligand>
</feature>
<feature type="binding site" evidence="1">
    <location>
        <position position="149"/>
    </location>
    <ligand>
        <name>[4Fe-4S] cluster</name>
        <dbReference type="ChEBI" id="CHEBI:49883"/>
        <label>2</label>
        <note>4Fe-4S-S-AdoMet</note>
    </ligand>
</feature>
<feature type="binding site" evidence="1">
    <location>
        <position position="152"/>
    </location>
    <ligand>
        <name>[4Fe-4S] cluster</name>
        <dbReference type="ChEBI" id="CHEBI:49883"/>
        <label>2</label>
        <note>4Fe-4S-S-AdoMet</note>
    </ligand>
</feature>
<evidence type="ECO:0000255" key="1">
    <source>
        <dbReference type="HAMAP-Rule" id="MF_01865"/>
    </source>
</evidence>
<evidence type="ECO:0000255" key="2">
    <source>
        <dbReference type="PROSITE-ProRule" id="PRU01266"/>
    </source>
</evidence>
<accession>Q0KBP2</accession>
<gene>
    <name evidence="1" type="primary">rimO</name>
    <name type="ordered locus">H16_A1444</name>
</gene>
<protein>
    <recommendedName>
        <fullName evidence="1">Ribosomal protein uS12 methylthiotransferase RimO</fullName>
        <shortName evidence="1">uS12 MTTase</shortName>
        <shortName evidence="1">uS12 methylthiotransferase</shortName>
        <ecNumber evidence="1">2.8.4.4</ecNumber>
    </recommendedName>
    <alternativeName>
        <fullName evidence="1">Ribosomal protein uS12 (aspartate-C(3))-methylthiotransferase</fullName>
    </alternativeName>
    <alternativeName>
        <fullName evidence="1">Ribosome maturation factor RimO</fullName>
    </alternativeName>
</protein>
<organism>
    <name type="scientific">Cupriavidus necator (strain ATCC 17699 / DSM 428 / KCTC 22496 / NCIMB 10442 / H16 / Stanier 337)</name>
    <name type="common">Ralstonia eutropha</name>
    <dbReference type="NCBI Taxonomy" id="381666"/>
    <lineage>
        <taxon>Bacteria</taxon>
        <taxon>Pseudomonadati</taxon>
        <taxon>Pseudomonadota</taxon>
        <taxon>Betaproteobacteria</taxon>
        <taxon>Burkholderiales</taxon>
        <taxon>Burkholderiaceae</taxon>
        <taxon>Cupriavidus</taxon>
    </lineage>
</organism>
<dbReference type="EC" id="2.8.4.4" evidence="1"/>
<dbReference type="EMBL" id="AM260479">
    <property type="protein sequence ID" value="CAJ92579.1"/>
    <property type="molecule type" value="Genomic_DNA"/>
</dbReference>
<dbReference type="SMR" id="Q0KBP2"/>
<dbReference type="STRING" id="381666.H16_A1444"/>
<dbReference type="KEGG" id="reh:H16_A1444"/>
<dbReference type="eggNOG" id="COG0621">
    <property type="taxonomic scope" value="Bacteria"/>
</dbReference>
<dbReference type="HOGENOM" id="CLU_018697_0_0_4"/>
<dbReference type="Proteomes" id="UP000008210">
    <property type="component" value="Chromosome 1"/>
</dbReference>
<dbReference type="GO" id="GO:0005829">
    <property type="term" value="C:cytosol"/>
    <property type="evidence" value="ECO:0007669"/>
    <property type="project" value="TreeGrafter"/>
</dbReference>
<dbReference type="GO" id="GO:0051539">
    <property type="term" value="F:4 iron, 4 sulfur cluster binding"/>
    <property type="evidence" value="ECO:0007669"/>
    <property type="project" value="UniProtKB-UniRule"/>
</dbReference>
<dbReference type="GO" id="GO:0035599">
    <property type="term" value="F:aspartic acid methylthiotransferase activity"/>
    <property type="evidence" value="ECO:0007669"/>
    <property type="project" value="TreeGrafter"/>
</dbReference>
<dbReference type="GO" id="GO:0046872">
    <property type="term" value="F:metal ion binding"/>
    <property type="evidence" value="ECO:0007669"/>
    <property type="project" value="UniProtKB-KW"/>
</dbReference>
<dbReference type="GO" id="GO:0103039">
    <property type="term" value="F:protein methylthiotransferase activity"/>
    <property type="evidence" value="ECO:0007669"/>
    <property type="project" value="UniProtKB-EC"/>
</dbReference>
<dbReference type="GO" id="GO:0006400">
    <property type="term" value="P:tRNA modification"/>
    <property type="evidence" value="ECO:0007669"/>
    <property type="project" value="InterPro"/>
</dbReference>
<dbReference type="CDD" id="cd01335">
    <property type="entry name" value="Radical_SAM"/>
    <property type="match status" value="1"/>
</dbReference>
<dbReference type="FunFam" id="3.40.50.12160:FF:000002">
    <property type="entry name" value="Ribosomal protein S12 methylthiotransferase RimO"/>
    <property type="match status" value="1"/>
</dbReference>
<dbReference type="FunFam" id="3.80.30.20:FF:000001">
    <property type="entry name" value="tRNA-2-methylthio-N(6)-dimethylallyladenosine synthase 2"/>
    <property type="match status" value="1"/>
</dbReference>
<dbReference type="Gene3D" id="3.40.50.12160">
    <property type="entry name" value="Methylthiotransferase, N-terminal domain"/>
    <property type="match status" value="1"/>
</dbReference>
<dbReference type="Gene3D" id="2.40.50.140">
    <property type="entry name" value="Nucleic acid-binding proteins"/>
    <property type="match status" value="1"/>
</dbReference>
<dbReference type="Gene3D" id="3.80.30.20">
    <property type="entry name" value="tm_1862 like domain"/>
    <property type="match status" value="1"/>
</dbReference>
<dbReference type="HAMAP" id="MF_01865">
    <property type="entry name" value="MTTase_RimO"/>
    <property type="match status" value="1"/>
</dbReference>
<dbReference type="InterPro" id="IPR006638">
    <property type="entry name" value="Elp3/MiaA/NifB-like_rSAM"/>
</dbReference>
<dbReference type="InterPro" id="IPR005839">
    <property type="entry name" value="Methylthiotransferase"/>
</dbReference>
<dbReference type="InterPro" id="IPR020612">
    <property type="entry name" value="Methylthiotransferase_CS"/>
</dbReference>
<dbReference type="InterPro" id="IPR013848">
    <property type="entry name" value="Methylthiotransferase_N"/>
</dbReference>
<dbReference type="InterPro" id="IPR038135">
    <property type="entry name" value="Methylthiotransferase_N_sf"/>
</dbReference>
<dbReference type="InterPro" id="IPR012340">
    <property type="entry name" value="NA-bd_OB-fold"/>
</dbReference>
<dbReference type="InterPro" id="IPR005840">
    <property type="entry name" value="Ribosomal_uS12_MeSTrfase_RimO"/>
</dbReference>
<dbReference type="InterPro" id="IPR007197">
    <property type="entry name" value="rSAM"/>
</dbReference>
<dbReference type="InterPro" id="IPR023404">
    <property type="entry name" value="rSAM_horseshoe"/>
</dbReference>
<dbReference type="InterPro" id="IPR002792">
    <property type="entry name" value="TRAM_dom"/>
</dbReference>
<dbReference type="NCBIfam" id="TIGR01125">
    <property type="entry name" value="30S ribosomal protein S12 methylthiotransferase RimO"/>
    <property type="match status" value="1"/>
</dbReference>
<dbReference type="NCBIfam" id="TIGR00089">
    <property type="entry name" value="MiaB/RimO family radical SAM methylthiotransferase"/>
    <property type="match status" value="1"/>
</dbReference>
<dbReference type="PANTHER" id="PTHR43837">
    <property type="entry name" value="RIBOSOMAL PROTEIN S12 METHYLTHIOTRANSFERASE RIMO"/>
    <property type="match status" value="1"/>
</dbReference>
<dbReference type="PANTHER" id="PTHR43837:SF1">
    <property type="entry name" value="RIBOSOMAL PROTEIN US12 METHYLTHIOTRANSFERASE RIMO"/>
    <property type="match status" value="1"/>
</dbReference>
<dbReference type="Pfam" id="PF04055">
    <property type="entry name" value="Radical_SAM"/>
    <property type="match status" value="1"/>
</dbReference>
<dbReference type="Pfam" id="PF18693">
    <property type="entry name" value="TRAM_2"/>
    <property type="match status" value="1"/>
</dbReference>
<dbReference type="Pfam" id="PF00919">
    <property type="entry name" value="UPF0004"/>
    <property type="match status" value="1"/>
</dbReference>
<dbReference type="SFLD" id="SFLDG01082">
    <property type="entry name" value="B12-binding_domain_containing"/>
    <property type="match status" value="1"/>
</dbReference>
<dbReference type="SFLD" id="SFLDG01061">
    <property type="entry name" value="methylthiotransferase"/>
    <property type="match status" value="1"/>
</dbReference>
<dbReference type="SFLD" id="SFLDF00274">
    <property type="entry name" value="ribosomal_protein_S12_methylth"/>
    <property type="match status" value="1"/>
</dbReference>
<dbReference type="SMART" id="SM00729">
    <property type="entry name" value="Elp3"/>
    <property type="match status" value="1"/>
</dbReference>
<dbReference type="SUPFAM" id="SSF102114">
    <property type="entry name" value="Radical SAM enzymes"/>
    <property type="match status" value="1"/>
</dbReference>
<dbReference type="PROSITE" id="PS51449">
    <property type="entry name" value="MTTASE_N"/>
    <property type="match status" value="1"/>
</dbReference>
<dbReference type="PROSITE" id="PS01278">
    <property type="entry name" value="MTTASE_RADICAL"/>
    <property type="match status" value="1"/>
</dbReference>
<dbReference type="PROSITE" id="PS51918">
    <property type="entry name" value="RADICAL_SAM"/>
    <property type="match status" value="1"/>
</dbReference>
<dbReference type="PROSITE" id="PS50926">
    <property type="entry name" value="TRAM"/>
    <property type="match status" value="1"/>
</dbReference>
<comment type="function">
    <text evidence="1">Catalyzes the methylthiolation of an aspartic acid residue of ribosomal protein uS12.</text>
</comment>
<comment type="catalytic activity">
    <reaction evidence="1">
        <text>L-aspartate(89)-[ribosomal protein uS12]-hydrogen + (sulfur carrier)-SH + AH2 + 2 S-adenosyl-L-methionine = 3-methylsulfanyl-L-aspartate(89)-[ribosomal protein uS12]-hydrogen + (sulfur carrier)-H + 5'-deoxyadenosine + L-methionine + A + S-adenosyl-L-homocysteine + 2 H(+)</text>
        <dbReference type="Rhea" id="RHEA:37087"/>
        <dbReference type="Rhea" id="RHEA-COMP:10460"/>
        <dbReference type="Rhea" id="RHEA-COMP:10461"/>
        <dbReference type="Rhea" id="RHEA-COMP:14737"/>
        <dbReference type="Rhea" id="RHEA-COMP:14739"/>
        <dbReference type="ChEBI" id="CHEBI:13193"/>
        <dbReference type="ChEBI" id="CHEBI:15378"/>
        <dbReference type="ChEBI" id="CHEBI:17319"/>
        <dbReference type="ChEBI" id="CHEBI:17499"/>
        <dbReference type="ChEBI" id="CHEBI:29917"/>
        <dbReference type="ChEBI" id="CHEBI:29961"/>
        <dbReference type="ChEBI" id="CHEBI:57844"/>
        <dbReference type="ChEBI" id="CHEBI:57856"/>
        <dbReference type="ChEBI" id="CHEBI:59789"/>
        <dbReference type="ChEBI" id="CHEBI:64428"/>
        <dbReference type="ChEBI" id="CHEBI:73599"/>
        <dbReference type="EC" id="2.8.4.4"/>
    </reaction>
</comment>
<comment type="cofactor">
    <cofactor evidence="1">
        <name>[4Fe-4S] cluster</name>
        <dbReference type="ChEBI" id="CHEBI:49883"/>
    </cofactor>
    <text evidence="1">Binds 2 [4Fe-4S] clusters. One cluster is coordinated with 3 cysteines and an exchangeable S-adenosyl-L-methionine.</text>
</comment>
<comment type="subcellular location">
    <subcellularLocation>
        <location evidence="1">Cytoplasm</location>
    </subcellularLocation>
</comment>
<comment type="similarity">
    <text evidence="1">Belongs to the methylthiotransferase family. RimO subfamily.</text>
</comment>